<sequence length="171" mass="18787">MVVQPDIPGDNDPGMGRRLGVDVGTVRIGLAMSDSGARMAMPFETLARETGLKDSDKQDIDRIAEVICDNHIVEVVVGLPRDLKGNGSKSVKHAKDVAFRIRRRMHKNGWEHVAVKMADERLTTVVATQALRASGVSEKKGRRVVDQAAAVEILQSWLDARINVLENRTIP</sequence>
<organism>
    <name type="scientific">Corynebacterium diphtheriae (strain ATCC 700971 / NCTC 13129 / Biotype gravis)</name>
    <dbReference type="NCBI Taxonomy" id="257309"/>
    <lineage>
        <taxon>Bacteria</taxon>
        <taxon>Bacillati</taxon>
        <taxon>Actinomycetota</taxon>
        <taxon>Actinomycetes</taxon>
        <taxon>Mycobacteriales</taxon>
        <taxon>Corynebacteriaceae</taxon>
        <taxon>Corynebacterium</taxon>
    </lineage>
</organism>
<accession>Q6NGZ8</accession>
<comment type="function">
    <text evidence="1">Could be a nuclease involved in processing of the 5'-end of pre-16S rRNA.</text>
</comment>
<comment type="subcellular location">
    <subcellularLocation>
        <location evidence="1">Cytoplasm</location>
    </subcellularLocation>
</comment>
<comment type="similarity">
    <text evidence="1">Belongs to the YqgF nuclease family.</text>
</comment>
<comment type="sequence caution" evidence="2">
    <conflict type="erroneous initiation">
        <sequence resource="EMBL-CDS" id="CAE49877"/>
    </conflict>
    <text>Extended N-terminus.</text>
</comment>
<name>YQGF_CORDI</name>
<dbReference type="EC" id="3.1.-.-" evidence="1"/>
<dbReference type="EMBL" id="BX248357">
    <property type="protein sequence ID" value="CAE49877.1"/>
    <property type="status" value="ALT_INIT"/>
    <property type="molecule type" value="Genomic_DNA"/>
</dbReference>
<dbReference type="SMR" id="Q6NGZ8"/>
<dbReference type="STRING" id="257309.DIP1349"/>
<dbReference type="KEGG" id="cdi:DIP1349"/>
<dbReference type="HOGENOM" id="CLU_098240_0_1_11"/>
<dbReference type="Proteomes" id="UP000002198">
    <property type="component" value="Chromosome"/>
</dbReference>
<dbReference type="GO" id="GO:0005829">
    <property type="term" value="C:cytosol"/>
    <property type="evidence" value="ECO:0007669"/>
    <property type="project" value="TreeGrafter"/>
</dbReference>
<dbReference type="GO" id="GO:0004518">
    <property type="term" value="F:nuclease activity"/>
    <property type="evidence" value="ECO:0007669"/>
    <property type="project" value="UniProtKB-KW"/>
</dbReference>
<dbReference type="GO" id="GO:0000967">
    <property type="term" value="P:rRNA 5'-end processing"/>
    <property type="evidence" value="ECO:0007669"/>
    <property type="project" value="UniProtKB-UniRule"/>
</dbReference>
<dbReference type="CDD" id="cd16964">
    <property type="entry name" value="YqgF"/>
    <property type="match status" value="1"/>
</dbReference>
<dbReference type="Gene3D" id="3.30.420.140">
    <property type="entry name" value="YqgF/RNase H-like domain"/>
    <property type="match status" value="1"/>
</dbReference>
<dbReference type="HAMAP" id="MF_00651">
    <property type="entry name" value="Nuclease_YqgF"/>
    <property type="match status" value="1"/>
</dbReference>
<dbReference type="InterPro" id="IPR012337">
    <property type="entry name" value="RNaseH-like_sf"/>
</dbReference>
<dbReference type="InterPro" id="IPR005227">
    <property type="entry name" value="YqgF"/>
</dbReference>
<dbReference type="InterPro" id="IPR006641">
    <property type="entry name" value="YqgF/RNaseH-like_dom"/>
</dbReference>
<dbReference type="InterPro" id="IPR037027">
    <property type="entry name" value="YqgF/RNaseH-like_dom_sf"/>
</dbReference>
<dbReference type="NCBIfam" id="TIGR00250">
    <property type="entry name" value="RNAse_H_YqgF"/>
    <property type="match status" value="1"/>
</dbReference>
<dbReference type="PANTHER" id="PTHR33317">
    <property type="entry name" value="POLYNUCLEOTIDYL TRANSFERASE, RIBONUCLEASE H-LIKE SUPERFAMILY PROTEIN"/>
    <property type="match status" value="1"/>
</dbReference>
<dbReference type="PANTHER" id="PTHR33317:SF4">
    <property type="entry name" value="POLYNUCLEOTIDYL TRANSFERASE, RIBONUCLEASE H-LIKE SUPERFAMILY PROTEIN"/>
    <property type="match status" value="1"/>
</dbReference>
<dbReference type="Pfam" id="PF03652">
    <property type="entry name" value="RuvX"/>
    <property type="match status" value="1"/>
</dbReference>
<dbReference type="SMART" id="SM00732">
    <property type="entry name" value="YqgFc"/>
    <property type="match status" value="1"/>
</dbReference>
<dbReference type="SUPFAM" id="SSF53098">
    <property type="entry name" value="Ribonuclease H-like"/>
    <property type="match status" value="1"/>
</dbReference>
<proteinExistence type="inferred from homology"/>
<feature type="chain" id="PRO_0000172052" description="Putative pre-16S rRNA nuclease">
    <location>
        <begin position="1"/>
        <end position="171"/>
    </location>
</feature>
<gene>
    <name type="ordered locus">DIP1349</name>
</gene>
<reference key="1">
    <citation type="journal article" date="2003" name="Nucleic Acids Res.">
        <title>The complete genome sequence and analysis of Corynebacterium diphtheriae NCTC13129.</title>
        <authorList>
            <person name="Cerdeno-Tarraga A.-M."/>
            <person name="Efstratiou A."/>
            <person name="Dover L.G."/>
            <person name="Holden M.T.G."/>
            <person name="Pallen M.J."/>
            <person name="Bentley S.D."/>
            <person name="Besra G.S."/>
            <person name="Churcher C.M."/>
            <person name="James K.D."/>
            <person name="De Zoysa A."/>
            <person name="Chillingworth T."/>
            <person name="Cronin A."/>
            <person name="Dowd L."/>
            <person name="Feltwell T."/>
            <person name="Hamlin N."/>
            <person name="Holroyd S."/>
            <person name="Jagels K."/>
            <person name="Moule S."/>
            <person name="Quail M.A."/>
            <person name="Rabbinowitsch E."/>
            <person name="Rutherford K.M."/>
            <person name="Thomson N.R."/>
            <person name="Unwin L."/>
            <person name="Whitehead S."/>
            <person name="Barrell B.G."/>
            <person name="Parkhill J."/>
        </authorList>
    </citation>
    <scope>NUCLEOTIDE SEQUENCE [LARGE SCALE GENOMIC DNA]</scope>
    <source>
        <strain>ATCC 700971 / NCTC 13129 / Biotype gravis</strain>
    </source>
</reference>
<protein>
    <recommendedName>
        <fullName evidence="1">Putative pre-16S rRNA nuclease</fullName>
        <ecNumber evidence="1">3.1.-.-</ecNumber>
    </recommendedName>
</protein>
<keyword id="KW-0963">Cytoplasm</keyword>
<keyword id="KW-0378">Hydrolase</keyword>
<keyword id="KW-0540">Nuclease</keyword>
<keyword id="KW-1185">Reference proteome</keyword>
<keyword id="KW-0690">Ribosome biogenesis</keyword>
<evidence type="ECO:0000255" key="1">
    <source>
        <dbReference type="HAMAP-Rule" id="MF_00651"/>
    </source>
</evidence>
<evidence type="ECO:0000305" key="2"/>